<reference key="1">
    <citation type="journal article" date="2000" name="Nature">
        <title>Complete genome sequence of Pseudomonas aeruginosa PAO1, an opportunistic pathogen.</title>
        <authorList>
            <person name="Stover C.K."/>
            <person name="Pham X.-Q.T."/>
            <person name="Erwin A.L."/>
            <person name="Mizoguchi S.D."/>
            <person name="Warrener P."/>
            <person name="Hickey M.J."/>
            <person name="Brinkman F.S.L."/>
            <person name="Hufnagle W.O."/>
            <person name="Kowalik D.J."/>
            <person name="Lagrou M."/>
            <person name="Garber R.L."/>
            <person name="Goltry L."/>
            <person name="Tolentino E."/>
            <person name="Westbrock-Wadman S."/>
            <person name="Yuan Y."/>
            <person name="Brody L.L."/>
            <person name="Coulter S.N."/>
            <person name="Folger K.R."/>
            <person name="Kas A."/>
            <person name="Larbig K."/>
            <person name="Lim R.M."/>
            <person name="Smith K.A."/>
            <person name="Spencer D.H."/>
            <person name="Wong G.K.-S."/>
            <person name="Wu Z."/>
            <person name="Paulsen I.T."/>
            <person name="Reizer J."/>
            <person name="Saier M.H. Jr."/>
            <person name="Hancock R.E.W."/>
            <person name="Lory S."/>
            <person name="Olson M.V."/>
        </authorList>
    </citation>
    <scope>NUCLEOTIDE SEQUENCE [LARGE SCALE GENOMIC DNA]</scope>
    <source>
        <strain>ATCC 15692 / DSM 22644 / CIP 104116 / JCM 14847 / LMG 12228 / 1C / PRS 101 / PAO1</strain>
    </source>
</reference>
<keyword id="KW-0997">Cell inner membrane</keyword>
<keyword id="KW-1003">Cell membrane</keyword>
<keyword id="KW-0143">Chaperone</keyword>
<keyword id="KW-1015">Disulfide bond</keyword>
<keyword id="KW-0249">Electron transport</keyword>
<keyword id="KW-0472">Membrane</keyword>
<keyword id="KW-0560">Oxidoreductase</keyword>
<keyword id="KW-0676">Redox-active center</keyword>
<keyword id="KW-1185">Reference proteome</keyword>
<keyword id="KW-0812">Transmembrane</keyword>
<keyword id="KW-1133">Transmembrane helix</keyword>
<keyword id="KW-0813">Transport</keyword>
<gene>
    <name type="primary">dsbB2</name>
    <name type="ordered locus">PA0538</name>
</gene>
<organism>
    <name type="scientific">Pseudomonas aeruginosa (strain ATCC 15692 / DSM 22644 / CIP 104116 / JCM 14847 / LMG 12228 / 1C / PRS 101 / PAO1)</name>
    <dbReference type="NCBI Taxonomy" id="208964"/>
    <lineage>
        <taxon>Bacteria</taxon>
        <taxon>Pseudomonadati</taxon>
        <taxon>Pseudomonadota</taxon>
        <taxon>Gammaproteobacteria</taxon>
        <taxon>Pseudomonadales</taxon>
        <taxon>Pseudomonadaceae</taxon>
        <taxon>Pseudomonas</taxon>
    </lineage>
</organism>
<comment type="function">
    <text evidence="1">Required for disulfide bond formation in some periplasmic proteins. Acts by oxidizing the DsbA protein (By similarity).</text>
</comment>
<comment type="subcellular location">
    <subcellularLocation>
        <location evidence="1">Cell inner membrane</location>
        <topology evidence="1">Multi-pass membrane protein</topology>
    </subcellularLocation>
</comment>
<comment type="similarity">
    <text evidence="3">Belongs to the DsbB family.</text>
</comment>
<proteinExistence type="inferred from homology"/>
<feature type="chain" id="PRO_0000059351" description="Disulfide bond formation protein B 2">
    <location>
        <begin position="1"/>
        <end position="169"/>
    </location>
</feature>
<feature type="topological domain" description="Cytoplasmic" evidence="2">
    <location>
        <begin position="1"/>
        <end position="13"/>
    </location>
</feature>
<feature type="transmembrane region" description="Helical" evidence="2">
    <location>
        <begin position="14"/>
        <end position="30"/>
    </location>
</feature>
<feature type="topological domain" description="Periplasmic" evidence="2">
    <location>
        <begin position="31"/>
        <end position="48"/>
    </location>
</feature>
<feature type="transmembrane region" description="Helical" evidence="2">
    <location>
        <begin position="49"/>
        <end position="64"/>
    </location>
</feature>
<feature type="topological domain" description="Cytoplasmic" evidence="2">
    <location>
        <begin position="65"/>
        <end position="71"/>
    </location>
</feature>
<feature type="transmembrane region" description="Helical" evidence="2">
    <location>
        <begin position="72"/>
        <end position="89"/>
    </location>
</feature>
<feature type="topological domain" description="Periplasmic" evidence="2">
    <location>
        <begin position="90"/>
        <end position="145"/>
    </location>
</feature>
<feature type="transmembrane region" description="Helical" evidence="2">
    <location>
        <begin position="146"/>
        <end position="164"/>
    </location>
</feature>
<feature type="topological domain" description="Cytoplasmic" evidence="2">
    <location>
        <begin position="165"/>
        <end position="169"/>
    </location>
</feature>
<feature type="disulfide bond" description="Redox-active" evidence="1">
    <location>
        <begin position="40"/>
        <end position="43"/>
    </location>
</feature>
<feature type="disulfide bond" description="Redox-active" evidence="1">
    <location>
        <begin position="105"/>
        <end position="131"/>
    </location>
</feature>
<dbReference type="EMBL" id="AE004091">
    <property type="protein sequence ID" value="AAG03927.1"/>
    <property type="molecule type" value="Genomic_DNA"/>
</dbReference>
<dbReference type="PIR" id="E83578">
    <property type="entry name" value="E83578"/>
</dbReference>
<dbReference type="RefSeq" id="WP_003113232.1">
    <property type="nucleotide sequence ID" value="NZ_QZGE01000010.1"/>
</dbReference>
<dbReference type="SMR" id="P57701"/>
<dbReference type="FunCoup" id="P57701">
    <property type="interactions" value="92"/>
</dbReference>
<dbReference type="STRING" id="208964.PA0538"/>
<dbReference type="PaxDb" id="208964-PA0538"/>
<dbReference type="DNASU" id="878500"/>
<dbReference type="KEGG" id="pae:PA0538"/>
<dbReference type="PATRIC" id="fig|208964.12.peg.570"/>
<dbReference type="PseudoCAP" id="PA0538"/>
<dbReference type="HOGENOM" id="CLU_098660_1_1_6"/>
<dbReference type="InParanoid" id="P57701"/>
<dbReference type="OrthoDB" id="3711263at2"/>
<dbReference type="PhylomeDB" id="P57701"/>
<dbReference type="BioCyc" id="PAER208964:G1FZ6-544-MONOMER"/>
<dbReference type="Proteomes" id="UP000002438">
    <property type="component" value="Chromosome"/>
</dbReference>
<dbReference type="GO" id="GO:0005886">
    <property type="term" value="C:plasma membrane"/>
    <property type="evidence" value="ECO:0007669"/>
    <property type="project" value="UniProtKB-SubCell"/>
</dbReference>
<dbReference type="GO" id="GO:0009055">
    <property type="term" value="F:electron transfer activity"/>
    <property type="evidence" value="ECO:0007669"/>
    <property type="project" value="UniProtKB-UniRule"/>
</dbReference>
<dbReference type="GO" id="GO:0015035">
    <property type="term" value="F:protein-disulfide reductase activity"/>
    <property type="evidence" value="ECO:0000318"/>
    <property type="project" value="GO_Central"/>
</dbReference>
<dbReference type="GO" id="GO:0006457">
    <property type="term" value="P:protein folding"/>
    <property type="evidence" value="ECO:0000315"/>
    <property type="project" value="PseudoCAP"/>
</dbReference>
<dbReference type="Gene3D" id="1.20.1550.10">
    <property type="entry name" value="DsbB-like"/>
    <property type="match status" value="1"/>
</dbReference>
<dbReference type="HAMAP" id="MF_00286">
    <property type="entry name" value="DsbB"/>
    <property type="match status" value="1"/>
</dbReference>
<dbReference type="InterPro" id="IPR003752">
    <property type="entry name" value="DiS_bond_form_DsbB/BdbC"/>
</dbReference>
<dbReference type="InterPro" id="IPR022920">
    <property type="entry name" value="Disulphide_bond_form_DsbB"/>
</dbReference>
<dbReference type="InterPro" id="IPR050183">
    <property type="entry name" value="DsbB"/>
</dbReference>
<dbReference type="InterPro" id="IPR023380">
    <property type="entry name" value="DsbB-like_sf"/>
</dbReference>
<dbReference type="PANTHER" id="PTHR36570">
    <property type="entry name" value="DISULFIDE BOND FORMATION PROTEIN B"/>
    <property type="match status" value="1"/>
</dbReference>
<dbReference type="PANTHER" id="PTHR36570:SF2">
    <property type="entry name" value="DISULFIDE BOND FORMATION PROTEIN B"/>
    <property type="match status" value="1"/>
</dbReference>
<dbReference type="Pfam" id="PF02600">
    <property type="entry name" value="DsbB"/>
    <property type="match status" value="1"/>
</dbReference>
<dbReference type="SUPFAM" id="SSF158442">
    <property type="entry name" value="DsbB-like"/>
    <property type="match status" value="1"/>
</dbReference>
<accession>P57701</accession>
<accession>Q9I5Z8</accession>
<protein>
    <recommendedName>
        <fullName>Disulfide bond formation protein B 2</fullName>
    </recommendedName>
    <alternativeName>
        <fullName>Disulfide oxidoreductase 2</fullName>
    </alternativeName>
</protein>
<sequence>MSALLKPLDNRLFWPAVAIGGLLILAFVLYLQHVRGFAPCSLCIFIRLDVLGLVLAGIVGSLAPRSRIAGGIAALGMLAASLGGIYHAWSLVAEEKLAAQGMGSCKMFMGFPEWIPLDTWLPQVFQPEGLCGEVVWTLLGQSMAVWSLALFVFCLLVLAAKLAFGRRTA</sequence>
<evidence type="ECO:0000250" key="1"/>
<evidence type="ECO:0000255" key="2"/>
<evidence type="ECO:0000305" key="3"/>
<name>DSBB2_PSEAE</name>